<feature type="chain" id="PRO_0000182842" description="Deoxyuridine 5'-triphosphate nucleotidohydrolase">
    <location>
        <begin position="1"/>
        <end position="151"/>
    </location>
</feature>
<feature type="binding site" evidence="1">
    <location>
        <begin position="69"/>
        <end position="71"/>
    </location>
    <ligand>
        <name>substrate</name>
    </ligand>
</feature>
<feature type="binding site" evidence="1">
    <location>
        <position position="82"/>
    </location>
    <ligand>
        <name>substrate</name>
    </ligand>
</feature>
<feature type="binding site" evidence="1">
    <location>
        <begin position="86"/>
        <end position="88"/>
    </location>
    <ligand>
        <name>substrate</name>
    </ligand>
</feature>
<feature type="binding site" evidence="1">
    <location>
        <position position="96"/>
    </location>
    <ligand>
        <name>substrate</name>
    </ligand>
</feature>
<accession>Q7VRK0</accession>
<sequence>MKIINIKIIRNNINNFSLPQHITPGSAGLDLLACIEKPVSILPKETRLIPTGIAIYIEDIEVAGIILPRSGLGHYYGIVLGNTIGLIDSDYQGEIMISLWNRGSNKFILYPGKRIAQLLFISILRVKLSLVKSFDPFMKTIRGVKGFGHSM</sequence>
<name>DUT_BLOFL</name>
<dbReference type="EC" id="3.6.1.23" evidence="1"/>
<dbReference type="EMBL" id="BX248583">
    <property type="protein sequence ID" value="CAD83288.1"/>
    <property type="molecule type" value="Genomic_DNA"/>
</dbReference>
<dbReference type="SMR" id="Q7VRK0"/>
<dbReference type="STRING" id="203907.Bfl613"/>
<dbReference type="KEGG" id="bfl:Bfl613"/>
<dbReference type="eggNOG" id="COG0756">
    <property type="taxonomic scope" value="Bacteria"/>
</dbReference>
<dbReference type="HOGENOM" id="CLU_068508_1_1_6"/>
<dbReference type="OrthoDB" id="9809956at2"/>
<dbReference type="UniPathway" id="UPA00610">
    <property type="reaction ID" value="UER00666"/>
</dbReference>
<dbReference type="Proteomes" id="UP000002192">
    <property type="component" value="Chromosome"/>
</dbReference>
<dbReference type="GO" id="GO:0004170">
    <property type="term" value="F:dUTP diphosphatase activity"/>
    <property type="evidence" value="ECO:0007669"/>
    <property type="project" value="UniProtKB-UniRule"/>
</dbReference>
<dbReference type="GO" id="GO:0000287">
    <property type="term" value="F:magnesium ion binding"/>
    <property type="evidence" value="ECO:0007669"/>
    <property type="project" value="UniProtKB-UniRule"/>
</dbReference>
<dbReference type="GO" id="GO:0006226">
    <property type="term" value="P:dUMP biosynthetic process"/>
    <property type="evidence" value="ECO:0007669"/>
    <property type="project" value="UniProtKB-UniRule"/>
</dbReference>
<dbReference type="GO" id="GO:0046081">
    <property type="term" value="P:dUTP catabolic process"/>
    <property type="evidence" value="ECO:0007669"/>
    <property type="project" value="InterPro"/>
</dbReference>
<dbReference type="CDD" id="cd07557">
    <property type="entry name" value="trimeric_dUTPase"/>
    <property type="match status" value="1"/>
</dbReference>
<dbReference type="FunFam" id="2.70.40.10:FF:000002">
    <property type="entry name" value="dUTP diphosphatase"/>
    <property type="match status" value="1"/>
</dbReference>
<dbReference type="Gene3D" id="2.70.40.10">
    <property type="match status" value="1"/>
</dbReference>
<dbReference type="HAMAP" id="MF_00116">
    <property type="entry name" value="dUTPase_bact"/>
    <property type="match status" value="1"/>
</dbReference>
<dbReference type="InterPro" id="IPR008181">
    <property type="entry name" value="dUTPase"/>
</dbReference>
<dbReference type="InterPro" id="IPR029054">
    <property type="entry name" value="dUTPase-like"/>
</dbReference>
<dbReference type="InterPro" id="IPR036157">
    <property type="entry name" value="dUTPase-like_sf"/>
</dbReference>
<dbReference type="InterPro" id="IPR033704">
    <property type="entry name" value="dUTPase_trimeric"/>
</dbReference>
<dbReference type="NCBIfam" id="TIGR00576">
    <property type="entry name" value="dut"/>
    <property type="match status" value="1"/>
</dbReference>
<dbReference type="NCBIfam" id="NF001862">
    <property type="entry name" value="PRK00601.1"/>
    <property type="match status" value="1"/>
</dbReference>
<dbReference type="PANTHER" id="PTHR11241">
    <property type="entry name" value="DEOXYURIDINE 5'-TRIPHOSPHATE NUCLEOTIDOHYDROLASE"/>
    <property type="match status" value="1"/>
</dbReference>
<dbReference type="PANTHER" id="PTHR11241:SF0">
    <property type="entry name" value="DEOXYURIDINE 5'-TRIPHOSPHATE NUCLEOTIDOHYDROLASE"/>
    <property type="match status" value="1"/>
</dbReference>
<dbReference type="Pfam" id="PF00692">
    <property type="entry name" value="dUTPase"/>
    <property type="match status" value="1"/>
</dbReference>
<dbReference type="SUPFAM" id="SSF51283">
    <property type="entry name" value="dUTPase-like"/>
    <property type="match status" value="1"/>
</dbReference>
<gene>
    <name evidence="1" type="primary">dut</name>
    <name type="ordered locus">Bfl613</name>
</gene>
<keyword id="KW-0378">Hydrolase</keyword>
<keyword id="KW-0460">Magnesium</keyword>
<keyword id="KW-0479">Metal-binding</keyword>
<keyword id="KW-0546">Nucleotide metabolism</keyword>
<keyword id="KW-1185">Reference proteome</keyword>
<comment type="function">
    <text evidence="1">This enzyme is involved in nucleotide metabolism: it produces dUMP, the immediate precursor of thymidine nucleotides and it decreases the intracellular concentration of dUTP so that uracil cannot be incorporated into DNA.</text>
</comment>
<comment type="catalytic activity">
    <reaction evidence="1">
        <text>dUTP + H2O = dUMP + diphosphate + H(+)</text>
        <dbReference type="Rhea" id="RHEA:10248"/>
        <dbReference type="ChEBI" id="CHEBI:15377"/>
        <dbReference type="ChEBI" id="CHEBI:15378"/>
        <dbReference type="ChEBI" id="CHEBI:33019"/>
        <dbReference type="ChEBI" id="CHEBI:61555"/>
        <dbReference type="ChEBI" id="CHEBI:246422"/>
        <dbReference type="EC" id="3.6.1.23"/>
    </reaction>
</comment>
<comment type="cofactor">
    <cofactor evidence="1">
        <name>Mg(2+)</name>
        <dbReference type="ChEBI" id="CHEBI:18420"/>
    </cofactor>
</comment>
<comment type="pathway">
    <text evidence="1">Pyrimidine metabolism; dUMP biosynthesis; dUMP from dCTP (dUTP route): step 2/2.</text>
</comment>
<comment type="similarity">
    <text evidence="1">Belongs to the dUTPase family.</text>
</comment>
<proteinExistence type="inferred from homology"/>
<evidence type="ECO:0000255" key="1">
    <source>
        <dbReference type="HAMAP-Rule" id="MF_00116"/>
    </source>
</evidence>
<reference key="1">
    <citation type="journal article" date="2003" name="Proc. Natl. Acad. Sci. U.S.A.">
        <title>The genome sequence of Blochmannia floridanus: comparative analysis of reduced genomes.</title>
        <authorList>
            <person name="Gil R."/>
            <person name="Silva F.J."/>
            <person name="Zientz E."/>
            <person name="Delmotte F."/>
            <person name="Gonzalez-Candelas F."/>
            <person name="Latorre A."/>
            <person name="Rausell C."/>
            <person name="Kamerbeek J."/>
            <person name="Gadau J."/>
            <person name="Hoelldobler B."/>
            <person name="van Ham R.C.H.J."/>
            <person name="Gross R."/>
            <person name="Moya A."/>
        </authorList>
    </citation>
    <scope>NUCLEOTIDE SEQUENCE [LARGE SCALE GENOMIC DNA]</scope>
</reference>
<protein>
    <recommendedName>
        <fullName evidence="1">Deoxyuridine 5'-triphosphate nucleotidohydrolase</fullName>
        <shortName evidence="1">dUTPase</shortName>
        <ecNumber evidence="1">3.6.1.23</ecNumber>
    </recommendedName>
    <alternativeName>
        <fullName evidence="1">dUTP pyrophosphatase</fullName>
    </alternativeName>
</protein>
<organism>
    <name type="scientific">Blochmanniella floridana</name>
    <dbReference type="NCBI Taxonomy" id="203907"/>
    <lineage>
        <taxon>Bacteria</taxon>
        <taxon>Pseudomonadati</taxon>
        <taxon>Pseudomonadota</taxon>
        <taxon>Gammaproteobacteria</taxon>
        <taxon>Enterobacterales</taxon>
        <taxon>Enterobacteriaceae</taxon>
        <taxon>ant endosymbionts</taxon>
        <taxon>Candidatus Blochmanniella</taxon>
    </lineage>
</organism>